<accession>Q6F7R3</accession>
<evidence type="ECO:0000255" key="1">
    <source>
        <dbReference type="HAMAP-Rule" id="MF_01328"/>
    </source>
</evidence>
<evidence type="ECO:0000256" key="2">
    <source>
        <dbReference type="SAM" id="MobiDB-lite"/>
    </source>
</evidence>
<evidence type="ECO:0000305" key="3"/>
<sequence length="205" mass="22097">MRGNNVNLKTVSGSAVELSEVAFGREFNEALVHQVVTAYLAGGRQGTRAQKSRAEVSGGGKKPFRQKGTGRARAGSIRSPIWVGGGKTFAARPQDWSQKVNRKMYRGAMQCILAELVRQDRLVLVEEFAVAAPKTKELLAKLNDLNAARALIVTDAVDENLYLAARNLPHVDVVDATAIDPVSLIAFDKVVMSVAAAKKIEVELG</sequence>
<organism>
    <name type="scientific">Acinetobacter baylyi (strain ATCC 33305 / BD413 / ADP1)</name>
    <dbReference type="NCBI Taxonomy" id="62977"/>
    <lineage>
        <taxon>Bacteria</taxon>
        <taxon>Pseudomonadati</taxon>
        <taxon>Pseudomonadota</taxon>
        <taxon>Gammaproteobacteria</taxon>
        <taxon>Moraxellales</taxon>
        <taxon>Moraxellaceae</taxon>
        <taxon>Acinetobacter</taxon>
    </lineage>
</organism>
<reference key="1">
    <citation type="journal article" date="2004" name="Nucleic Acids Res.">
        <title>Unique features revealed by the genome sequence of Acinetobacter sp. ADP1, a versatile and naturally transformation competent bacterium.</title>
        <authorList>
            <person name="Barbe V."/>
            <person name="Vallenet D."/>
            <person name="Fonknechten N."/>
            <person name="Kreimeyer A."/>
            <person name="Oztas S."/>
            <person name="Labarre L."/>
            <person name="Cruveiller S."/>
            <person name="Robert C."/>
            <person name="Duprat S."/>
            <person name="Wincker P."/>
            <person name="Ornston L.N."/>
            <person name="Weissenbach J."/>
            <person name="Marliere P."/>
            <person name="Cohen G.N."/>
            <person name="Medigue C."/>
        </authorList>
    </citation>
    <scope>NUCLEOTIDE SEQUENCE [LARGE SCALE GENOMIC DNA]</scope>
    <source>
        <strain>ATCC 33305 / BD413 / ADP1</strain>
    </source>
</reference>
<protein>
    <recommendedName>
        <fullName evidence="1">Large ribosomal subunit protein uL4</fullName>
    </recommendedName>
    <alternativeName>
        <fullName evidence="3">50S ribosomal protein L4</fullName>
    </alternativeName>
</protein>
<comment type="function">
    <text evidence="1">One of the primary rRNA binding proteins, this protein initially binds near the 5'-end of the 23S rRNA. It is important during the early stages of 50S assembly. It makes multiple contacts with different domains of the 23S rRNA in the assembled 50S subunit and ribosome.</text>
</comment>
<comment type="function">
    <text evidence="1">Forms part of the polypeptide exit tunnel.</text>
</comment>
<comment type="subunit">
    <text evidence="1">Part of the 50S ribosomal subunit.</text>
</comment>
<comment type="similarity">
    <text evidence="1">Belongs to the universal ribosomal protein uL4 family.</text>
</comment>
<dbReference type="EMBL" id="CR543861">
    <property type="protein sequence ID" value="CAG69902.1"/>
    <property type="molecule type" value="Genomic_DNA"/>
</dbReference>
<dbReference type="SMR" id="Q6F7R3"/>
<dbReference type="STRING" id="202950.GCA_001485005_02937"/>
<dbReference type="KEGG" id="aci:ACIAD3218"/>
<dbReference type="eggNOG" id="COG0088">
    <property type="taxonomic scope" value="Bacteria"/>
</dbReference>
<dbReference type="HOGENOM" id="CLU_041575_5_2_6"/>
<dbReference type="Proteomes" id="UP000000430">
    <property type="component" value="Chromosome"/>
</dbReference>
<dbReference type="GO" id="GO:1990904">
    <property type="term" value="C:ribonucleoprotein complex"/>
    <property type="evidence" value="ECO:0007669"/>
    <property type="project" value="UniProtKB-KW"/>
</dbReference>
<dbReference type="GO" id="GO:0005840">
    <property type="term" value="C:ribosome"/>
    <property type="evidence" value="ECO:0007669"/>
    <property type="project" value="UniProtKB-KW"/>
</dbReference>
<dbReference type="GO" id="GO:0019843">
    <property type="term" value="F:rRNA binding"/>
    <property type="evidence" value="ECO:0007669"/>
    <property type="project" value="UniProtKB-UniRule"/>
</dbReference>
<dbReference type="GO" id="GO:0003735">
    <property type="term" value="F:structural constituent of ribosome"/>
    <property type="evidence" value="ECO:0007669"/>
    <property type="project" value="InterPro"/>
</dbReference>
<dbReference type="GO" id="GO:0006412">
    <property type="term" value="P:translation"/>
    <property type="evidence" value="ECO:0007669"/>
    <property type="project" value="UniProtKB-UniRule"/>
</dbReference>
<dbReference type="FunFam" id="3.40.1370.10:FF:000001">
    <property type="entry name" value="50S ribosomal protein L4"/>
    <property type="match status" value="1"/>
</dbReference>
<dbReference type="Gene3D" id="3.40.1370.10">
    <property type="match status" value="1"/>
</dbReference>
<dbReference type="HAMAP" id="MF_01328_B">
    <property type="entry name" value="Ribosomal_uL4_B"/>
    <property type="match status" value="1"/>
</dbReference>
<dbReference type="InterPro" id="IPR002136">
    <property type="entry name" value="Ribosomal_uL4"/>
</dbReference>
<dbReference type="InterPro" id="IPR013005">
    <property type="entry name" value="Ribosomal_uL4-like"/>
</dbReference>
<dbReference type="InterPro" id="IPR023574">
    <property type="entry name" value="Ribosomal_uL4_dom_sf"/>
</dbReference>
<dbReference type="NCBIfam" id="TIGR03953">
    <property type="entry name" value="rplD_bact"/>
    <property type="match status" value="1"/>
</dbReference>
<dbReference type="PANTHER" id="PTHR10746">
    <property type="entry name" value="50S RIBOSOMAL PROTEIN L4"/>
    <property type="match status" value="1"/>
</dbReference>
<dbReference type="PANTHER" id="PTHR10746:SF6">
    <property type="entry name" value="LARGE RIBOSOMAL SUBUNIT PROTEIN UL4M"/>
    <property type="match status" value="1"/>
</dbReference>
<dbReference type="Pfam" id="PF00573">
    <property type="entry name" value="Ribosomal_L4"/>
    <property type="match status" value="1"/>
</dbReference>
<dbReference type="SUPFAM" id="SSF52166">
    <property type="entry name" value="Ribosomal protein L4"/>
    <property type="match status" value="1"/>
</dbReference>
<name>RL4_ACIAD</name>
<proteinExistence type="inferred from homology"/>
<feature type="chain" id="PRO_0000242330" description="Large ribosomal subunit protein uL4">
    <location>
        <begin position="1"/>
        <end position="205"/>
    </location>
</feature>
<feature type="region of interest" description="Disordered" evidence="2">
    <location>
        <begin position="47"/>
        <end position="70"/>
    </location>
</feature>
<gene>
    <name evidence="1" type="primary">rplD</name>
    <name type="ordered locus">ACIAD3218</name>
</gene>
<keyword id="KW-0687">Ribonucleoprotein</keyword>
<keyword id="KW-0689">Ribosomal protein</keyword>
<keyword id="KW-0694">RNA-binding</keyword>
<keyword id="KW-0699">rRNA-binding</keyword>